<organism>
    <name type="scientific">Pyrobaculum islandicum (strain DSM 4184 / JCM 9189 / GEO3)</name>
    <dbReference type="NCBI Taxonomy" id="384616"/>
    <lineage>
        <taxon>Archaea</taxon>
        <taxon>Thermoproteota</taxon>
        <taxon>Thermoprotei</taxon>
        <taxon>Thermoproteales</taxon>
        <taxon>Thermoproteaceae</taxon>
        <taxon>Pyrobaculum</taxon>
    </lineage>
</organism>
<reference key="1">
    <citation type="submission" date="2006-12" db="EMBL/GenBank/DDBJ databases">
        <title>Complete sequence of Pyrobaculum islandicum DSM 4184.</title>
        <authorList>
            <person name="Copeland A."/>
            <person name="Lucas S."/>
            <person name="Lapidus A."/>
            <person name="Barry K."/>
            <person name="Detter J.C."/>
            <person name="Glavina del Rio T."/>
            <person name="Dalin E."/>
            <person name="Tice H."/>
            <person name="Pitluck S."/>
            <person name="Meincke L."/>
            <person name="Brettin T."/>
            <person name="Bruce D."/>
            <person name="Han C."/>
            <person name="Tapia R."/>
            <person name="Gilna P."/>
            <person name="Schmutz J."/>
            <person name="Larimer F."/>
            <person name="Land M."/>
            <person name="Hauser L."/>
            <person name="Kyrpides N."/>
            <person name="Mikhailova N."/>
            <person name="Cozen A.E."/>
            <person name="Fitz-Gibbon S.T."/>
            <person name="House C.H."/>
            <person name="Saltikov C."/>
            <person name="Lowe T."/>
            <person name="Richardson P."/>
        </authorList>
    </citation>
    <scope>NUCLEOTIDE SEQUENCE [LARGE SCALE GENOMIC DNA]</scope>
    <source>
        <strain>DSM 4184 / JCM 9189 / GEO3</strain>
    </source>
</reference>
<gene>
    <name evidence="1" type="primary">leuS</name>
    <name type="ordered locus">Pisl_1246</name>
</gene>
<proteinExistence type="inferred from homology"/>
<accession>A1RTX9</accession>
<protein>
    <recommendedName>
        <fullName evidence="1">Leucine--tRNA ligase</fullName>
        <ecNumber evidence="1">6.1.1.4</ecNumber>
    </recommendedName>
    <alternativeName>
        <fullName evidence="1">Leucyl-tRNA synthetase</fullName>
        <shortName evidence="1">LeuRS</shortName>
    </alternativeName>
</protein>
<comment type="catalytic activity">
    <reaction evidence="1">
        <text>tRNA(Leu) + L-leucine + ATP = L-leucyl-tRNA(Leu) + AMP + diphosphate</text>
        <dbReference type="Rhea" id="RHEA:11688"/>
        <dbReference type="Rhea" id="RHEA-COMP:9613"/>
        <dbReference type="Rhea" id="RHEA-COMP:9622"/>
        <dbReference type="ChEBI" id="CHEBI:30616"/>
        <dbReference type="ChEBI" id="CHEBI:33019"/>
        <dbReference type="ChEBI" id="CHEBI:57427"/>
        <dbReference type="ChEBI" id="CHEBI:78442"/>
        <dbReference type="ChEBI" id="CHEBI:78494"/>
        <dbReference type="ChEBI" id="CHEBI:456215"/>
        <dbReference type="EC" id="6.1.1.4"/>
    </reaction>
</comment>
<comment type="subcellular location">
    <subcellularLocation>
        <location evidence="1">Cytoplasm</location>
    </subcellularLocation>
</comment>
<comment type="similarity">
    <text evidence="1">Belongs to the class-I aminoacyl-tRNA synthetase family.</text>
</comment>
<feature type="chain" id="PRO_1000009405" description="Leucine--tRNA ligase">
    <location>
        <begin position="1"/>
        <end position="945"/>
    </location>
</feature>
<feature type="short sequence motif" description="'HIGH' region">
    <location>
        <begin position="43"/>
        <end position="53"/>
    </location>
</feature>
<feature type="short sequence motif" description="'KMSKS' region">
    <location>
        <begin position="638"/>
        <end position="642"/>
    </location>
</feature>
<feature type="binding site" evidence="1">
    <location>
        <position position="641"/>
    </location>
    <ligand>
        <name>ATP</name>
        <dbReference type="ChEBI" id="CHEBI:30616"/>
    </ligand>
</feature>
<dbReference type="EC" id="6.1.1.4" evidence="1"/>
<dbReference type="EMBL" id="CP000504">
    <property type="protein sequence ID" value="ABL88411.1"/>
    <property type="molecule type" value="Genomic_DNA"/>
</dbReference>
<dbReference type="RefSeq" id="WP_011762986.1">
    <property type="nucleotide sequence ID" value="NC_008701.1"/>
</dbReference>
<dbReference type="SMR" id="A1RTX9"/>
<dbReference type="STRING" id="384616.Pisl_1246"/>
<dbReference type="GeneID" id="4616435"/>
<dbReference type="KEGG" id="pis:Pisl_1246"/>
<dbReference type="eggNOG" id="arCOG00809">
    <property type="taxonomic scope" value="Archaea"/>
</dbReference>
<dbReference type="HOGENOM" id="CLU_004174_0_0_2"/>
<dbReference type="OrthoDB" id="23906at2157"/>
<dbReference type="Proteomes" id="UP000002595">
    <property type="component" value="Chromosome"/>
</dbReference>
<dbReference type="GO" id="GO:0005737">
    <property type="term" value="C:cytoplasm"/>
    <property type="evidence" value="ECO:0007669"/>
    <property type="project" value="UniProtKB-SubCell"/>
</dbReference>
<dbReference type="GO" id="GO:0002161">
    <property type="term" value="F:aminoacyl-tRNA deacylase activity"/>
    <property type="evidence" value="ECO:0007669"/>
    <property type="project" value="InterPro"/>
</dbReference>
<dbReference type="GO" id="GO:0005524">
    <property type="term" value="F:ATP binding"/>
    <property type="evidence" value="ECO:0007669"/>
    <property type="project" value="UniProtKB-UniRule"/>
</dbReference>
<dbReference type="GO" id="GO:0004823">
    <property type="term" value="F:leucine-tRNA ligase activity"/>
    <property type="evidence" value="ECO:0007669"/>
    <property type="project" value="UniProtKB-UniRule"/>
</dbReference>
<dbReference type="GO" id="GO:0006429">
    <property type="term" value="P:leucyl-tRNA aminoacylation"/>
    <property type="evidence" value="ECO:0007669"/>
    <property type="project" value="UniProtKB-UniRule"/>
</dbReference>
<dbReference type="CDD" id="cd00812">
    <property type="entry name" value="LeuRS_core"/>
    <property type="match status" value="1"/>
</dbReference>
<dbReference type="Gene3D" id="3.30.2320.20">
    <property type="entry name" value="Class I aminoacyl-tRNA synthetases (RS)"/>
    <property type="match status" value="1"/>
</dbReference>
<dbReference type="Gene3D" id="3.40.50.620">
    <property type="entry name" value="HUPs"/>
    <property type="match status" value="1"/>
</dbReference>
<dbReference type="Gene3D" id="1.10.730.10">
    <property type="entry name" value="Isoleucyl-tRNA Synthetase, Domain 1"/>
    <property type="match status" value="1"/>
</dbReference>
<dbReference type="Gene3D" id="1.10.10.720">
    <property type="entry name" value="leucyl-tRNA synthetase"/>
    <property type="match status" value="1"/>
</dbReference>
<dbReference type="Gene3D" id="3.90.740.10">
    <property type="entry name" value="Valyl/Leucyl/Isoleucyl-tRNA synthetase, editing domain"/>
    <property type="match status" value="1"/>
</dbReference>
<dbReference type="HAMAP" id="MF_00049_A">
    <property type="entry name" value="Leu_tRNA_synth_A"/>
    <property type="match status" value="1"/>
</dbReference>
<dbReference type="InterPro" id="IPR001412">
    <property type="entry name" value="aa-tRNA-synth_I_CS"/>
</dbReference>
<dbReference type="InterPro" id="IPR002300">
    <property type="entry name" value="aa-tRNA-synth_Ia"/>
</dbReference>
<dbReference type="InterPro" id="IPR020791">
    <property type="entry name" value="Leu-tRNA-lgase_arc"/>
</dbReference>
<dbReference type="InterPro" id="IPR004493">
    <property type="entry name" value="Leu-tRNA-synth_Ia_arc/euk"/>
</dbReference>
<dbReference type="InterPro" id="IPR013155">
    <property type="entry name" value="M/V/L/I-tRNA-synth_anticd-bd"/>
</dbReference>
<dbReference type="InterPro" id="IPR014729">
    <property type="entry name" value="Rossmann-like_a/b/a_fold"/>
</dbReference>
<dbReference type="InterPro" id="IPR009080">
    <property type="entry name" value="tRNAsynth_Ia_anticodon-bd"/>
</dbReference>
<dbReference type="InterPro" id="IPR009008">
    <property type="entry name" value="Val/Leu/Ile-tRNA-synth_edit"/>
</dbReference>
<dbReference type="NCBIfam" id="TIGR00395">
    <property type="entry name" value="leuS_arch"/>
    <property type="match status" value="1"/>
</dbReference>
<dbReference type="NCBIfam" id="NF008957">
    <property type="entry name" value="PRK12300.1"/>
    <property type="match status" value="1"/>
</dbReference>
<dbReference type="PANTHER" id="PTHR45794:SF1">
    <property type="entry name" value="LEUCINE--TRNA LIGASE, CYTOPLASMIC"/>
    <property type="match status" value="1"/>
</dbReference>
<dbReference type="PANTHER" id="PTHR45794">
    <property type="entry name" value="LEUCYL-TRNA SYNTHETASE"/>
    <property type="match status" value="1"/>
</dbReference>
<dbReference type="Pfam" id="PF08264">
    <property type="entry name" value="Anticodon_1"/>
    <property type="match status" value="1"/>
</dbReference>
<dbReference type="Pfam" id="PF00133">
    <property type="entry name" value="tRNA-synt_1"/>
    <property type="match status" value="1"/>
</dbReference>
<dbReference type="SUPFAM" id="SSF47323">
    <property type="entry name" value="Anticodon-binding domain of a subclass of class I aminoacyl-tRNA synthetases"/>
    <property type="match status" value="1"/>
</dbReference>
<dbReference type="SUPFAM" id="SSF52374">
    <property type="entry name" value="Nucleotidylyl transferase"/>
    <property type="match status" value="1"/>
</dbReference>
<dbReference type="SUPFAM" id="SSF50677">
    <property type="entry name" value="ValRS/IleRS/LeuRS editing domain"/>
    <property type="match status" value="1"/>
</dbReference>
<dbReference type="PROSITE" id="PS00178">
    <property type="entry name" value="AA_TRNA_LIGASE_I"/>
    <property type="match status" value="1"/>
</dbReference>
<name>SYL_PYRIL</name>
<keyword id="KW-0030">Aminoacyl-tRNA synthetase</keyword>
<keyword id="KW-0067">ATP-binding</keyword>
<keyword id="KW-0963">Cytoplasm</keyword>
<keyword id="KW-0436">Ligase</keyword>
<keyword id="KW-0547">Nucleotide-binding</keyword>
<keyword id="KW-0648">Protein biosynthesis</keyword>
<sequence>MSELSRFFIEIAERWQKRWKESRVFEPEPTPGVAKYFITAAYPYPNGAVHIGHGRTYLIADVLARFYRHMGRVVLYPMGFHYTGTPILTIAEVIAAGDKTVIEEYMEIYGVPEEEIKKMGDPLYLARYFHNRSKMAMERFGLSIDWTREFTTIDPEYQRFIQWQFEKLRKKGLIVRGRHPVGWCPRHSMPVGAHDTKDDKEPEIGQWTLIYFTDSEGLTFPAATLRPETVPGVTNLWINPDAEYVVAEFDGKRVVISRDAAYRLSFQAEVKILREARGREFVGRSVQNPVTGEWVPIYEAWFVDPRVGTGVVMSVPAHAPYDYVALRDLGIEKLIPLIKVEGYGDYPAKEVVERMGIKSQTDPALEEATKEVYSTEYTRGVMREDVTERIGIHLQEPARSMLRAVFKMYFAGRPVREAREFIAKWLVEARLGGVMYDIMNKPVYCRCGTEIVVKVLEDQWFINYGDPKWKETARKLVDEMVIIPGEAKAHFFATIDWLDKRACARTRGLGTPLPWSSGWIIESLSDSTIYMAFYTVIKKIRQFGIRPEQLTEEFWDFVFLGQGSADEVSKKTGVPVEALKAIREEFEYWYPLDSRNSGKDLIPNHLTFFIFNHVAIFPREKWPRQIVANGWVLREGEKMSKSKRNVLPLDRAVEMYGPDPLRATLALAAEVEQDLDFRDAEARRNAQQLMAIYTLVQRLIQNAENRPAGWIDQWLIAEISRILDKAREAYEKVRVRQAAVEVIYNAKAVFDQYLAMVEKPTKLALEAARAWVVAMEPIVPHIAEELWALLGGSGFVATAPWPRLKAESAALLAKRYVDMLIEDVKNIPAFGPGARRIVIYVNRNFSWAKAALNGDVKTVVTAGAPPQVAKRLIDLVKTLGDEVRTLLASTEQFDELETLKSYKAYIERTLGTPIEIYSVDDPSAPDLGGKKRAALPLKPGIYIER</sequence>
<evidence type="ECO:0000255" key="1">
    <source>
        <dbReference type="HAMAP-Rule" id="MF_00049"/>
    </source>
</evidence>